<evidence type="ECO:0000269" key="1">
    <source>
    </source>
</evidence>
<evidence type="ECO:0000269" key="2">
    <source>
    </source>
</evidence>
<evidence type="ECO:0000269" key="3">
    <source>
    </source>
</evidence>
<evidence type="ECO:0000269" key="4">
    <source>
    </source>
</evidence>
<evidence type="ECO:0000269" key="5">
    <source>
    </source>
</evidence>
<evidence type="ECO:0000269" key="6">
    <source ref="6"/>
</evidence>
<evidence type="ECO:0000303" key="7">
    <source>
    </source>
</evidence>
<evidence type="ECO:0000303" key="8">
    <source>
    </source>
</evidence>
<evidence type="ECO:0000303" key="9">
    <source>
    </source>
</evidence>
<evidence type="ECO:0000303" key="10">
    <source>
    </source>
</evidence>
<evidence type="ECO:0000305" key="11"/>
<evidence type="ECO:0000305" key="12">
    <source>
    </source>
</evidence>
<evidence type="ECO:0000312" key="13">
    <source>
        <dbReference type="EMBL" id="BAB65442.1"/>
    </source>
</evidence>
<evidence type="ECO:0007744" key="14">
    <source>
        <dbReference type="PDB" id="2GGO"/>
    </source>
</evidence>
<evidence type="ECO:0007744" key="15">
    <source>
        <dbReference type="PDB" id="2GGQ"/>
    </source>
</evidence>
<evidence type="ECO:0007744" key="16">
    <source>
        <dbReference type="PDB" id="5Z09"/>
    </source>
</evidence>
<evidence type="ECO:0007744" key="17">
    <source>
        <dbReference type="PDB" id="5Z0A"/>
    </source>
</evidence>
<evidence type="ECO:0007829" key="18">
    <source>
        <dbReference type="PDB" id="2GGO"/>
    </source>
</evidence>
<evidence type="ECO:0007829" key="19">
    <source>
        <dbReference type="PDB" id="5Z09"/>
    </source>
</evidence>
<dbReference type="EC" id="2.7.7.24" evidence="1"/>
<dbReference type="EC" id="2.7.7.9" evidence="4 5"/>
<dbReference type="EC" id="2.7.7.83" evidence="2"/>
<dbReference type="EC" id="2.7.7.23" evidence="1 2 3 4 5"/>
<dbReference type="EC" id="2.3.1.276" evidence="2 3"/>
<dbReference type="EC" id="2.3.1.157" evidence="2 3"/>
<dbReference type="EMBL" id="BA000023">
    <property type="protein sequence ID" value="BAB65442.1"/>
    <property type="molecule type" value="Genomic_DNA"/>
</dbReference>
<dbReference type="PDB" id="2GGO">
    <property type="method" value="X-ray"/>
    <property type="resolution" value="1.80 A"/>
    <property type="chains" value="A=1-401"/>
</dbReference>
<dbReference type="PDB" id="2GGQ">
    <property type="method" value="X-ray"/>
    <property type="resolution" value="2.00 A"/>
    <property type="chains" value="A=1-401"/>
</dbReference>
<dbReference type="PDB" id="5Z09">
    <property type="method" value="X-ray"/>
    <property type="resolution" value="2.91 A"/>
    <property type="chains" value="A/B/C/D/E/F=1-401"/>
</dbReference>
<dbReference type="PDB" id="5Z0A">
    <property type="method" value="X-ray"/>
    <property type="resolution" value="2.09 A"/>
    <property type="chains" value="A/B/C/D/E/F=1-401"/>
</dbReference>
<dbReference type="PDBsum" id="2GGO"/>
<dbReference type="PDBsum" id="2GGQ"/>
<dbReference type="PDBsum" id="5Z09"/>
<dbReference type="PDBsum" id="5Z0A"/>
<dbReference type="SMR" id="Q975F9"/>
<dbReference type="STRING" id="273063.STK_04520"/>
<dbReference type="KEGG" id="sto:STK_04520"/>
<dbReference type="PATRIC" id="fig|273063.9.peg.524"/>
<dbReference type="eggNOG" id="arCOG00666">
    <property type="taxonomic scope" value="Archaea"/>
</dbReference>
<dbReference type="OrthoDB" id="15372at2157"/>
<dbReference type="BioCyc" id="MetaCyc:MONOMER-20592"/>
<dbReference type="BRENDA" id="2.3.1.157">
    <property type="organism ID" value="15396"/>
</dbReference>
<dbReference type="BRENDA" id="2.3.1.276">
    <property type="organism ID" value="15396"/>
</dbReference>
<dbReference type="BRENDA" id="2.7.7.23">
    <property type="organism ID" value="15396"/>
</dbReference>
<dbReference type="BRENDA" id="2.7.7.24">
    <property type="organism ID" value="15396"/>
</dbReference>
<dbReference type="BRENDA" id="2.7.7.37">
    <property type="organism ID" value="15396"/>
</dbReference>
<dbReference type="BRENDA" id="2.7.7.83">
    <property type="organism ID" value="15396"/>
</dbReference>
<dbReference type="BRENDA" id="2.7.7.9">
    <property type="organism ID" value="15396"/>
</dbReference>
<dbReference type="BRENDA" id="2.7.7.B18">
    <property type="organism ID" value="15396"/>
</dbReference>
<dbReference type="BRENDA" id="2.7.7.B19">
    <property type="organism ID" value="15396"/>
</dbReference>
<dbReference type="BRENDA" id="2.7.7.B20">
    <property type="organism ID" value="15396"/>
</dbReference>
<dbReference type="BRENDA" id="2.7.7.B21">
    <property type="organism ID" value="15396"/>
</dbReference>
<dbReference type="UniPathway" id="UPA00113">
    <property type="reaction ID" value="UER00532"/>
</dbReference>
<dbReference type="UniPathway" id="UPA00113">
    <property type="reaction ID" value="UER00533"/>
</dbReference>
<dbReference type="EvolutionaryTrace" id="Q975F9"/>
<dbReference type="Proteomes" id="UP000001015">
    <property type="component" value="Chromosome"/>
</dbReference>
<dbReference type="GO" id="GO:0019134">
    <property type="term" value="F:glucosamine-1-phosphate N-acetyltransferase activity"/>
    <property type="evidence" value="ECO:0007669"/>
    <property type="project" value="UniProtKB-EC"/>
</dbReference>
<dbReference type="GO" id="GO:0008879">
    <property type="term" value="F:glucose-1-phosphate thymidylyltransferase activity"/>
    <property type="evidence" value="ECO:0007669"/>
    <property type="project" value="UniProtKB-EC"/>
</dbReference>
<dbReference type="GO" id="GO:0000166">
    <property type="term" value="F:nucleotide binding"/>
    <property type="evidence" value="ECO:0007669"/>
    <property type="project" value="UniProtKB-KW"/>
</dbReference>
<dbReference type="GO" id="GO:0052630">
    <property type="term" value="F:UDP-N-acetylgalactosamine diphosphorylase activity"/>
    <property type="evidence" value="ECO:0007669"/>
    <property type="project" value="UniProtKB-EC"/>
</dbReference>
<dbReference type="GO" id="GO:0003977">
    <property type="term" value="F:UDP-N-acetylglucosamine diphosphorylase activity"/>
    <property type="evidence" value="ECO:0007669"/>
    <property type="project" value="UniProtKB-EC"/>
</dbReference>
<dbReference type="GO" id="GO:0003983">
    <property type="term" value="F:UTP:glucose-1-phosphate uridylyltransferase activity"/>
    <property type="evidence" value="ECO:0007669"/>
    <property type="project" value="UniProtKB-EC"/>
</dbReference>
<dbReference type="GO" id="GO:0006048">
    <property type="term" value="P:UDP-N-acetylglucosamine biosynthetic process"/>
    <property type="evidence" value="ECO:0007669"/>
    <property type="project" value="UniProtKB-UniPathway"/>
</dbReference>
<dbReference type="CDD" id="cd05636">
    <property type="entry name" value="LbH_G1P_TT_C_like"/>
    <property type="match status" value="1"/>
</dbReference>
<dbReference type="CDD" id="cd04181">
    <property type="entry name" value="NTP_transferase"/>
    <property type="match status" value="1"/>
</dbReference>
<dbReference type="Gene3D" id="2.160.10.10">
    <property type="entry name" value="Hexapeptide repeat proteins"/>
    <property type="match status" value="1"/>
</dbReference>
<dbReference type="Gene3D" id="3.90.550.10">
    <property type="entry name" value="Spore Coat Polysaccharide Biosynthesis Protein SpsA, Chain A"/>
    <property type="match status" value="1"/>
</dbReference>
<dbReference type="InterPro" id="IPR023915">
    <property type="entry name" value="Bifunctiontional_GlmU_arc-type"/>
</dbReference>
<dbReference type="InterPro" id="IPR050065">
    <property type="entry name" value="GlmU-like"/>
</dbReference>
<dbReference type="InterPro" id="IPR001451">
    <property type="entry name" value="Hexapep"/>
</dbReference>
<dbReference type="InterPro" id="IPR005835">
    <property type="entry name" value="NTP_transferase_dom"/>
</dbReference>
<dbReference type="InterPro" id="IPR029044">
    <property type="entry name" value="Nucleotide-diphossugar_trans"/>
</dbReference>
<dbReference type="InterPro" id="IPR053650">
    <property type="entry name" value="Sugar-1P_NT/AT"/>
</dbReference>
<dbReference type="InterPro" id="IPR011004">
    <property type="entry name" value="Trimer_LpxA-like_sf"/>
</dbReference>
<dbReference type="NCBIfam" id="TIGR03992">
    <property type="entry name" value="Arch_glmU"/>
    <property type="match status" value="1"/>
</dbReference>
<dbReference type="NCBIfam" id="NF041173">
    <property type="entry name" value="Sug_nt_acttase_Thmprot"/>
    <property type="match status" value="1"/>
</dbReference>
<dbReference type="PANTHER" id="PTHR43584:SF8">
    <property type="entry name" value="N-ACETYLMURAMATE ALPHA-1-PHOSPHATE URIDYLYLTRANSFERASE"/>
    <property type="match status" value="1"/>
</dbReference>
<dbReference type="PANTHER" id="PTHR43584">
    <property type="entry name" value="NUCLEOTIDYL TRANSFERASE"/>
    <property type="match status" value="1"/>
</dbReference>
<dbReference type="Pfam" id="PF00132">
    <property type="entry name" value="Hexapep"/>
    <property type="match status" value="2"/>
</dbReference>
<dbReference type="Pfam" id="PF00483">
    <property type="entry name" value="NTP_transferase"/>
    <property type="match status" value="1"/>
</dbReference>
<dbReference type="SUPFAM" id="SSF53448">
    <property type="entry name" value="Nucleotide-diphospho-sugar transferases"/>
    <property type="match status" value="1"/>
</dbReference>
<dbReference type="SUPFAM" id="SSF51161">
    <property type="entry name" value="Trimeric LpxA-like enzymes"/>
    <property type="match status" value="1"/>
</dbReference>
<accession>Q975F9</accession>
<name>S1PNA_SULTO</name>
<keyword id="KW-0002">3D-structure</keyword>
<keyword id="KW-0012">Acyltransferase</keyword>
<keyword id="KW-0170">Cobalt</keyword>
<keyword id="KW-0464">Manganese</keyword>
<keyword id="KW-0511">Multifunctional enzyme</keyword>
<keyword id="KW-0547">Nucleotide-binding</keyword>
<keyword id="KW-0548">Nucleotidyltransferase</keyword>
<keyword id="KW-1185">Reference proteome</keyword>
<keyword id="KW-0808">Transferase</keyword>
<protein>
    <recommendedName>
        <fullName evidence="11">Bifunctional sugar-1-phosphate nucleotidylyltransferase/acetyltransferase</fullName>
    </recommendedName>
    <domain>
        <recommendedName>
            <fullName evidence="7">Sugar-1-phosphate nucleotidylyltransferase</fullName>
            <shortName evidence="8">Sugar-1-P NTase</shortName>
        </recommendedName>
        <alternativeName>
            <fullName evidence="7">Glucose-1-phosphate thymidylyltransferase</fullName>
            <ecNumber evidence="1">2.7.7.24</ecNumber>
        </alternativeName>
        <alternativeName>
            <fullName evidence="11">Glucose-1-phosphate uridylyltransferase</fullName>
            <shortName evidence="10">Glc-1-P UTase</shortName>
            <ecNumber evidence="4 5">2.7.7.9</ecNumber>
        </alternativeName>
        <alternativeName>
            <fullName evidence="8">N-acetylgalactosamine-1-phosphate uridyltransferase</fullName>
            <shortName evidence="8">GalNAc-1-P UTase</shortName>
            <ecNumber evidence="2">2.7.7.83</ecNumber>
        </alternativeName>
        <alternativeName>
            <fullName evidence="7">N-acetylglucosamine-1-phosphate uridyltransferase</fullName>
            <shortName evidence="8">GlcNAc-1-P UTase</shortName>
            <ecNumber evidence="1 2 3 4 5">2.7.7.23</ecNumber>
        </alternativeName>
    </domain>
    <domain>
        <recommendedName>
            <fullName evidence="11">Sugar-1-phosphate acetyltransferase</fullName>
        </recommendedName>
        <alternativeName>
            <fullName evidence="8">Galactosamine-1-phosphate N-acetyltransferase</fullName>
            <shortName evidence="9">GalN-1-P AcTase</shortName>
            <shortName evidence="8">GalN-1-P acetyltransferase</shortName>
            <ecNumber evidence="2 3">2.3.1.276</ecNumber>
        </alternativeName>
        <alternativeName>
            <fullName evidence="8">Glucosamine-1-phosphate N-acetyltransferase</fullName>
            <shortName evidence="9">GlcN-1-P AcTase</shortName>
            <shortName evidence="8">GlcN-1-P acetyltransferase</shortName>
            <ecNumber evidence="2 3">2.3.1.157</ecNumber>
        </alternativeName>
    </domain>
</protein>
<sequence>MKAFILAAGSGERLEPITHTRPKAFVPILSKPLIEYQIEYLRKCGIRDITVIVSSKNKEYFEKKLKEISIVTQKDDIKGTGAAILSAKFNDEALIIYGDLFFSNEKEICNIITLKENAIIGVKVSNPKDYGVLVLDNQNNLSKIIEKPEIPPSNLINAGIYKLNSDIFTYLDKISISERGELELTDAINLMAKDHRVKVIEYEGYWMDIGKPWNIIDVNKWALDNLVFSQNLGNVEDNVKIKGKVIIEEDAEIKSGTYIEGPVYIGKGSEIGPNSYLRPYTILVEKNKIGASVEVKESVIMEGSKIPHLSYVGDSVIAEDVNFGAGTLIANLRFDEKEVKVNVKGKRISSGRRKLGAFIGGHVRTGINVTILPGVKIGAYARIYPGAVVNRDVGYGEFFKV</sequence>
<comment type="function">
    <text evidence="1 2 3 4 5">Bifunctional enzyme involved in the synthesis of UDP-N-acetylglucosamine (UDP-GlcNAc) and UDP-N-acetylgalactosamine (UDP-GalNAc). It has multiple amino-sugar-1-phosphate acetyltransferase activities, including glucosamine-1-phosphate (GlcN-1-P) acetyltransferase and galactosamine-1-phosphate (GalN-1-P) acetyltransferase activities, and multiple sugar-1-phosphate nucleotidylyltransferase activities, including N-acetylglucosamine-1-phosphate (GlcNAc-1-P) uridyltransferase and N-acetylgalactosamine-1-phosphate (GalNAc-1-P) uridyltransferase activities (PubMed:15598657, PubMed:20400541, PubMed:25567746). Also catalyzes the formation of dTDP-glucose from dTTP and glucose-1-phosphate (Glc-1-P), and the reverse reaction, which produces dTTP from dTDP-glucose and diphosphate (PubMed:15598657). Can also catalyze the formation of UDP-glucose from UTP and glucose-1-phosphate (PubMed:27864169, PubMed:30291121).</text>
</comment>
<comment type="catalytic activity">
    <reaction evidence="1">
        <text>dTTP + alpha-D-glucose 1-phosphate + H(+) = dTDP-alpha-D-glucose + diphosphate</text>
        <dbReference type="Rhea" id="RHEA:15225"/>
        <dbReference type="ChEBI" id="CHEBI:15378"/>
        <dbReference type="ChEBI" id="CHEBI:33019"/>
        <dbReference type="ChEBI" id="CHEBI:37568"/>
        <dbReference type="ChEBI" id="CHEBI:57477"/>
        <dbReference type="ChEBI" id="CHEBI:58601"/>
        <dbReference type="EC" id="2.7.7.24"/>
    </reaction>
</comment>
<comment type="catalytic activity">
    <reaction evidence="4 5">
        <text>alpha-D-glucose 1-phosphate + UTP + H(+) = UDP-alpha-D-glucose + diphosphate</text>
        <dbReference type="Rhea" id="RHEA:19889"/>
        <dbReference type="ChEBI" id="CHEBI:15378"/>
        <dbReference type="ChEBI" id="CHEBI:33019"/>
        <dbReference type="ChEBI" id="CHEBI:46398"/>
        <dbReference type="ChEBI" id="CHEBI:58601"/>
        <dbReference type="ChEBI" id="CHEBI:58885"/>
        <dbReference type="EC" id="2.7.7.9"/>
    </reaction>
</comment>
<comment type="catalytic activity">
    <reaction evidence="2">
        <text>N-acetyl-alpha-D-galactosamine 1-phosphate + UTP + H(+) = UDP-N-acetyl-alpha-D-galactosamine + diphosphate</text>
        <dbReference type="Rhea" id="RHEA:34363"/>
        <dbReference type="ChEBI" id="CHEBI:15378"/>
        <dbReference type="ChEBI" id="CHEBI:33019"/>
        <dbReference type="ChEBI" id="CHEBI:46398"/>
        <dbReference type="ChEBI" id="CHEBI:61970"/>
        <dbReference type="ChEBI" id="CHEBI:67138"/>
        <dbReference type="EC" id="2.7.7.83"/>
    </reaction>
</comment>
<comment type="catalytic activity">
    <reaction evidence="1 2 3 4 5">
        <text>N-acetyl-alpha-D-glucosamine 1-phosphate + UTP + H(+) = UDP-N-acetyl-alpha-D-glucosamine + diphosphate</text>
        <dbReference type="Rhea" id="RHEA:13509"/>
        <dbReference type="ChEBI" id="CHEBI:15378"/>
        <dbReference type="ChEBI" id="CHEBI:33019"/>
        <dbReference type="ChEBI" id="CHEBI:46398"/>
        <dbReference type="ChEBI" id="CHEBI:57705"/>
        <dbReference type="ChEBI" id="CHEBI:57776"/>
        <dbReference type="EC" id="2.7.7.23"/>
    </reaction>
</comment>
<comment type="catalytic activity">
    <reaction evidence="2 3">
        <text>alpha-D-galactosamine 1-phosphate + acetyl-CoA = N-acetyl-alpha-D-galactosamine 1-phosphate + CoA + H(+)</text>
        <dbReference type="Rhea" id="RHEA:17169"/>
        <dbReference type="ChEBI" id="CHEBI:15378"/>
        <dbReference type="ChEBI" id="CHEBI:57287"/>
        <dbReference type="ChEBI" id="CHEBI:57288"/>
        <dbReference type="ChEBI" id="CHEBI:61970"/>
        <dbReference type="ChEBI" id="CHEBI:142399"/>
        <dbReference type="EC" id="2.3.1.276"/>
    </reaction>
</comment>
<comment type="catalytic activity">
    <reaction evidence="2 3">
        <text>alpha-D-glucosamine 1-phosphate + acetyl-CoA = N-acetyl-alpha-D-glucosamine 1-phosphate + CoA + H(+)</text>
        <dbReference type="Rhea" id="RHEA:13725"/>
        <dbReference type="ChEBI" id="CHEBI:15378"/>
        <dbReference type="ChEBI" id="CHEBI:57287"/>
        <dbReference type="ChEBI" id="CHEBI:57288"/>
        <dbReference type="ChEBI" id="CHEBI:57776"/>
        <dbReference type="ChEBI" id="CHEBI:58516"/>
        <dbReference type="EC" id="2.3.1.157"/>
    </reaction>
</comment>
<comment type="cofactor">
    <cofactor evidence="1">
        <name>Co(2+)</name>
        <dbReference type="ChEBI" id="CHEBI:48828"/>
    </cofactor>
    <cofactor evidence="1">
        <name>Mn(2+)</name>
        <dbReference type="ChEBI" id="CHEBI:29035"/>
    </cofactor>
    <text evidence="1">Can also use Mg(2+) and Zn(2+), with lower efficiency. Important for nucleotidylyltransferase activity.</text>
</comment>
<comment type="activity regulation">
    <text evidence="2">GlcN-1-P acetyltransferase activity is inhibited by divalent cations. GalN-1-P acetyltransferase activity is enhanced by Co(2+), Mg(2+) and Ca(2+), but inhibited by Zn(2+) or Mn(2+).</text>
</comment>
<comment type="biophysicochemical properties">
    <kinetics>
        <KM evidence="2 3">1.71 mM for GalN-1-P</KM>
        <KM evidence="2 3">0.59 mM for GlcN-1-P</KM>
        <KM evidence="2 3">0.63 mM for acetyl-CoA (in the presence of GalN-1-P or GlcN-1-P)</KM>
        <KM evidence="4">0.068 mM for GlcNAc-1-P</KM>
        <KM evidence="4">1.23 mM for Glc-1-P (in the presence of UTP)</KM>
        <KM evidence="1">1.12 mM for Glc-1-P (in the presence of dTTP)</KM>
        <KM evidence="1">0.02 mM for dTTP</KM>
        <KM evidence="1">0.05 mM for dTDP-alpha-D-glucose for the reverse reaction of the glucose-1-phosphate thymidylyltransferase activity</KM>
        <KM evidence="1">0.39 mM for diphosphate for the reverse reaction of the glucose-1-phosphate thymidylyltransferase activity</KM>
        <KM evidence="2">0.056 mM for UDP-GalNAc for the reverse reaction of the GalNAc-1-P UTase activity</KM>
        <KM evidence="2">0.016 mM for UDP-GlcNAc for the reverse reaction of the GlcNAc-1-P UTase activity</KM>
        <Vmax evidence="1">1.46 umol/min/mg enzyme for the forward reaction with alpha-D-glucose 1-phosphate as substrate</Vmax>
        <Vmax evidence="1">13.65 umol/min/mg enzyme for the reverse reaction with dTDP-alpha-D-glucose as substrate</Vmax>
        <text evidence="2">kcat is 69.7 sec(-1) for GalN-1-P acetyltransferase activity. kcat is 123.2 sec(-1) for GlcN-1-P acetyltransferase activity.</text>
    </kinetics>
    <phDependence>
        <text evidence="1">Optimum pH is 8.5 for glucose-1-phosphate thymidylyltransferase activity.</text>
    </phDependence>
    <temperatureDependence>
        <text evidence="1">Optimum temperature is 95 degrees Celsius for glucose-1-phosphate thymidylyltransferase activity.</text>
    </temperatureDependence>
</comment>
<comment type="pathway">
    <text evidence="2">Nucleotide-sugar biosynthesis; UDP-N-acetyl-alpha-D-glucosamine biosynthesis; N-acetyl-alpha-D-glucosamine 1-phosphate from alpha-D-glucosamine 6-phosphate (route II): step 2/2.</text>
</comment>
<comment type="pathway">
    <text evidence="2">Nucleotide-sugar biosynthesis; UDP-N-acetyl-alpha-D-glucosamine biosynthesis; UDP-N-acetyl-alpha-D-glucosamine from N-acetyl-alpha-D-glucosamine 1-phosphate: step 1/1.</text>
</comment>
<comment type="subunit">
    <text evidence="3">Homotrimer.</text>
</comment>
<comment type="domain">
    <text evidence="3">The C-terminal domain is essential for the formation of the trimer and the high thermostability of the entire protein. The C-terminal 11 residues are important for GalN-1-P AcTase activity, but they have an inhibitory effect on the GlcN-1-P AcTase activity.</text>
</comment>
<comment type="similarity">
    <text evidence="11">In the N-terminal section; belongs to the N-acetylglucosamine-1-phosphate uridyltransferase family.</text>
</comment>
<comment type="similarity">
    <text evidence="11">In the C-terminal section; belongs to the transferase hexapeptide repeat family.</text>
</comment>
<reference key="1">
    <citation type="journal article" date="2001" name="DNA Res.">
        <title>Complete genome sequence of an aerobic thermoacidophilic Crenarchaeon, Sulfolobus tokodaii strain7.</title>
        <authorList>
            <person name="Kawarabayasi Y."/>
            <person name="Hino Y."/>
            <person name="Horikawa H."/>
            <person name="Jin-no K."/>
            <person name="Takahashi M."/>
            <person name="Sekine M."/>
            <person name="Baba S."/>
            <person name="Ankai A."/>
            <person name="Kosugi H."/>
            <person name="Hosoyama A."/>
            <person name="Fukui S."/>
            <person name="Nagai Y."/>
            <person name="Nishijima K."/>
            <person name="Otsuka R."/>
            <person name="Nakazawa H."/>
            <person name="Takamiya M."/>
            <person name="Kato Y."/>
            <person name="Yoshizawa T."/>
            <person name="Tanaka T."/>
            <person name="Kudoh Y."/>
            <person name="Yamazaki J."/>
            <person name="Kushida N."/>
            <person name="Oguchi A."/>
            <person name="Aoki K."/>
            <person name="Masuda S."/>
            <person name="Yanagii M."/>
            <person name="Nishimura M."/>
            <person name="Yamagishi A."/>
            <person name="Oshima T."/>
            <person name="Kikuchi H."/>
        </authorList>
    </citation>
    <scope>NUCLEOTIDE SEQUENCE [LARGE SCALE GENOMIC DNA]</scope>
    <source>
        <strain>DSM 16993 / JCM 10545 / NBRC 100140 / 7</strain>
    </source>
</reference>
<reference key="2">
    <citation type="journal article" date="2005" name="J. Biol. Chem.">
        <title>Identification of an extremely thermostable enzyme with dual sugar-1-phosphate nucleotidylyltransferase activities from an acidothermophilic archaeon, Sulfolobus tokodaii strain 7.</title>
        <authorList>
            <person name="Zhang Z."/>
            <person name="Tsujimura M."/>
            <person name="Akutsu J."/>
            <person name="Sasaki M."/>
            <person name="Tajima H."/>
            <person name="Kawarabayasi Y."/>
        </authorList>
    </citation>
    <scope>FUNCTION AS A NUCLEOTIDYLYLTRANSFERASE</scope>
    <scope>CATALYTIC ACTIVITY</scope>
    <scope>COFACTOR</scope>
    <scope>BIOPHYSICOCHEMICAL PROPERTIES</scope>
    <source>
        <strain>DSM 16993 / JCM 10545 / NBRC 100140 / 7</strain>
    </source>
</reference>
<reference key="3">
    <citation type="journal article" date="2010" name="J. Bacteriol.">
        <title>Identification of novel acetyltransferase activity on the thermostable protein ST0452 from Sulfolobus tokodaii strain 7.</title>
        <authorList>
            <person name="Zhang Z."/>
            <person name="Akutsu J."/>
            <person name="Kawarabayasi Y."/>
        </authorList>
    </citation>
    <scope>FUNCTION</scope>
    <scope>CATALYTIC ACTIVITY</scope>
    <scope>ACTIVITY REGULATION</scope>
    <scope>BIOPHYSICOCHEMICAL PROPERTIES</scope>
    <scope>PATHWAY</scope>
    <source>
        <strain>DSM 16993 / JCM 10545 / NBRC 100140 / 7</strain>
    </source>
</reference>
<reference key="4">
    <citation type="journal article" date="2015" name="Extremophiles">
        <title>Characterization of the amino acid residues mediating the unique amino-sugar-1-phosphate acetyltransferase activity of the archaeal ST0452 protein.</title>
        <authorList>
            <person name="Zhang Z."/>
            <person name="Shimizu Y."/>
            <person name="Kawarabayasi Y."/>
        </authorList>
    </citation>
    <scope>FUNCTION</scope>
    <scope>CATALYTIC ACTIVITY</scope>
    <scope>BIOPHYSICOCHEMICAL PROPERTIES</scope>
    <scope>SUBUNIT</scope>
    <scope>DOMAIN</scope>
    <scope>MUTAGENESIS OF HIS-308; TYR-311; ASN-331; LYS-337; LYS-340; 391-ARG--VAL-401 AND 397-GLU--VAL-401</scope>
    <source>
        <strain>DSM 16993 / JCM 10545 / NBRC 100140 / 7</strain>
    </source>
</reference>
<reference key="5">
    <citation type="journal article" date="2017" name="Appl. Environ. Microbiol.">
        <title>Increasing the thermostable sugar-1-phosphate nucleotidylyltransferase activities of the archaeal ST0452 protein through site saturation mutagenesis of the 97th amino acid position.</title>
        <authorList>
            <person name="Honda Y."/>
            <person name="Zang Q."/>
            <person name="Shimizu Y."/>
            <person name="Dadashipour M."/>
            <person name="Zhang Z."/>
            <person name="Kawarabayasi Y."/>
        </authorList>
    </citation>
    <scope>FUNCTION</scope>
    <scope>CATALYTIC ACTIVITY</scope>
    <scope>BIOPHYSICOCHEMICAL PROPERTIES</scope>
    <scope>MUTAGENESIS OF TYR-97</scope>
</reference>
<reference evidence="14 15" key="6">
    <citation type="submission" date="2006-03" db="PDB data bank">
        <title>Crystal structure of glucose-1-phosphate thymidylyltransferase from Sulfolobus tokodaii.</title>
        <authorList>
            <person name="Rajakannan V."/>
            <person name="Yamane T."/>
        </authorList>
    </citation>
    <scope>X-RAY CRYSTALLOGRAPHY (1.80 ANGSTROMS) OF APOENZYME AND IN COMPLEX WITH TTP</scope>
</reference>
<reference evidence="16 17" key="7">
    <citation type="journal article" date="2018" name="Appl. Environ. Microbiol.">
        <title>Improvement of ST0452 GlcNAc-1-phosphate uridyltransferase activity by the cooperative effect of two single mutations identified through structure-based protein engineering.</title>
        <authorList>
            <person name="Honda Y."/>
            <person name="Nakano S."/>
            <person name="Ito S."/>
            <person name="Dadashipour M."/>
            <person name="Zhang Z."/>
            <person name="Kawarabayasi Y."/>
        </authorList>
    </citation>
    <scope>X-RAY CRYSTALLOGRAPHY (2.09 ANGSTROMS) OF MUTANT ASN-97 IN COMPLEXES WITH UTP AND GLCNAC</scope>
    <scope>FUNCTION</scope>
    <scope>CATALYTIC ACTIVITY</scope>
    <scope>MUTAGENESIS OF THR-80; TYR-97 AND GLU-146</scope>
    <source>
        <strain>DSM 16993 / JCM 10545 / NBRC 100140 / 7</strain>
    </source>
</reference>
<proteinExistence type="evidence at protein level"/>
<gene>
    <name evidence="13" type="ordered locus">STK_04520</name>
    <name evidence="7" type="ORF">ST0452</name>
</gene>
<organism>
    <name type="scientific">Sulfurisphaera tokodaii (strain DSM 16993 / JCM 10545 / NBRC 100140 / 7)</name>
    <name type="common">Sulfolobus tokodaii</name>
    <dbReference type="NCBI Taxonomy" id="273063"/>
    <lineage>
        <taxon>Archaea</taxon>
        <taxon>Thermoproteota</taxon>
        <taxon>Thermoprotei</taxon>
        <taxon>Sulfolobales</taxon>
        <taxon>Sulfolobaceae</taxon>
        <taxon>Sulfurisphaera</taxon>
    </lineage>
</organism>
<feature type="chain" id="PRO_0000448068" description="Bifunctional sugar-1-phosphate nucleotidylyltransferase/acetyltransferase">
    <location>
        <begin position="1"/>
        <end position="401"/>
    </location>
</feature>
<feature type="region of interest" description="Nucleotidylyltransferase" evidence="11">
    <location>
        <begin position="1"/>
        <end position="220"/>
    </location>
</feature>
<feature type="region of interest" description="Acetyltransferase" evidence="11">
    <location>
        <begin position="236"/>
        <end position="401"/>
    </location>
</feature>
<feature type="binding site" evidence="5 6">
    <location>
        <begin position="8"/>
        <end position="13"/>
    </location>
    <ligand>
        <name>a ribonucleoside 5'-triphosphate</name>
        <dbReference type="ChEBI" id="CHEBI:61557"/>
    </ligand>
</feature>
<feature type="binding site" evidence="5 6">
    <location>
        <position position="73"/>
    </location>
    <ligand>
        <name>a ribonucleoside 5'-triphosphate</name>
        <dbReference type="ChEBI" id="CHEBI:61557"/>
    </ligand>
</feature>
<feature type="binding site" evidence="5 6">
    <location>
        <position position="79"/>
    </location>
    <ligand>
        <name>a ribonucleoside 5'-triphosphate</name>
        <dbReference type="ChEBI" id="CHEBI:61557"/>
    </ligand>
</feature>
<feature type="binding site" evidence="12 17">
    <location>
        <position position="80"/>
    </location>
    <ligand>
        <name>N-acetyl-alpha-D-glucosamine 1-phosphate</name>
        <dbReference type="ChEBI" id="CHEBI:57776"/>
    </ligand>
</feature>
<feature type="binding site" evidence="12 17">
    <location>
        <position position="97"/>
    </location>
    <ligand>
        <name>N-acetyl-alpha-D-glucosamine 1-phosphate</name>
        <dbReference type="ChEBI" id="CHEBI:57776"/>
    </ligand>
</feature>
<feature type="binding site" evidence="12 17">
    <location>
        <position position="131"/>
    </location>
    <ligand>
        <name>N-acetyl-alpha-D-glucosamine 1-phosphate</name>
        <dbReference type="ChEBI" id="CHEBI:57776"/>
    </ligand>
</feature>
<feature type="binding site" evidence="12 17">
    <location>
        <position position="146"/>
    </location>
    <ligand>
        <name>N-acetyl-alpha-D-glucosamine 1-phosphate</name>
        <dbReference type="ChEBI" id="CHEBI:57776"/>
    </ligand>
</feature>
<feature type="binding site" evidence="12 17">
    <location>
        <position position="157"/>
    </location>
    <ligand>
        <name>N-acetyl-alpha-D-glucosamine 1-phosphate</name>
        <dbReference type="ChEBI" id="CHEBI:57776"/>
    </ligand>
</feature>
<feature type="mutagenesis site" description="Increases both GlcNAc-1-P UTase and Glc-1-P UTase activities." evidence="5">
    <original>T</original>
    <variation>A</variation>
    <variation>G</variation>
    <variation>Q</variation>
    <location>
        <position position="80"/>
    </location>
</feature>
<feature type="mutagenesis site" description="Decrease in GlcNAc-1-P UTase activity but increase in Glc-1-P UTase activity." evidence="5">
    <original>T</original>
    <variation>D</variation>
    <variation>H</variation>
    <location>
        <position position="80"/>
    </location>
</feature>
<feature type="mutagenesis site" description="Strong decrease in GlcNAc-1-P UTase activity and loss of Glc-1-P UTase activity." evidence="5">
    <original>T</original>
    <variation>E</variation>
    <variation>K</variation>
    <variation>L</variation>
    <variation>M</variation>
    <variation>R</variation>
    <variation>W</variation>
    <variation>Y</variation>
    <location>
        <position position="80"/>
    </location>
</feature>
<feature type="mutagenesis site" description="Loss of both GlcNAc-1-P UTase and Glc-1-P UTase activities." evidence="5">
    <original>T</original>
    <variation>F</variation>
    <variation>I</variation>
    <location>
        <position position="80"/>
    </location>
</feature>
<feature type="mutagenesis site" description="Strong increase in GlcNAc-1-P UTase activity and decrease in Glc-1-P UTase activity." evidence="5">
    <original>T</original>
    <variation>N</variation>
    <variation>S</variation>
    <location>
        <position position="80"/>
    </location>
</feature>
<feature type="mutagenesis site" description="Loss of GlcNAc-1-P UTase activity; when associated with V-97." evidence="5">
    <original>T</original>
    <variation>N</variation>
    <location>
        <position position="80"/>
    </location>
</feature>
<feature type="mutagenesis site" description="Increases GlcNAc-1-P UTase activity. Decreases Glc-1-P UTase activity." evidence="4">
    <original>Y</original>
    <variation>A</variation>
    <variation>D</variation>
    <variation>F</variation>
    <variation>G</variation>
    <variation>I</variation>
    <variation>K</variation>
    <variation>T</variation>
    <variation>V</variation>
    <location>
        <position position="97"/>
    </location>
</feature>
<feature type="mutagenesis site" description="Decreases GlcNAc-1-P UTase and Glc-1-P UTase activities." evidence="4">
    <original>Y</original>
    <variation>C</variation>
    <variation>E</variation>
    <variation>P</variation>
    <variation>R</variation>
    <variation>W</variation>
    <location>
        <position position="97"/>
    </location>
</feature>
<feature type="mutagenesis site" description="Increases GlcNAc-1-P UTase and Glc-1-P UTase activities." evidence="4">
    <original>Y</original>
    <variation>H</variation>
    <variation>L</variation>
    <variation>M</variation>
    <variation>N</variation>
    <variation>Q</variation>
    <variation>S</variation>
    <location>
        <position position="97"/>
    </location>
</feature>
<feature type="mutagenesis site" description="Loss of GlcNAc-1-P UTase activity; when associated with N-80." evidence="5">
    <original>Y</original>
    <variation>V</variation>
    <location>
        <position position="97"/>
    </location>
</feature>
<feature type="mutagenesis site" description="Loss of both GlcNAc-1-P UTase and Glc-1-P UTase activities." evidence="5">
    <original>E</original>
    <variation>A</variation>
    <variation>C</variation>
    <variation>F</variation>
    <variation>G</variation>
    <variation>I</variation>
    <variation>K</variation>
    <variation>L</variation>
    <variation>M</variation>
    <variation>P</variation>
    <variation>Q</variation>
    <variation>R</variation>
    <variation>V</variation>
    <variation>W</variation>
    <variation>Y</variation>
    <location>
        <position position="146"/>
    </location>
</feature>
<feature type="mutagenesis site" description="Decrease in GlcNAc-1-P UTase and Glc-1-P UTase activities." evidence="5">
    <original>E</original>
    <variation>D</variation>
    <variation>N</variation>
    <location>
        <position position="146"/>
    </location>
</feature>
<feature type="mutagenesis site" description="Decrease in GlcNAc-1-P UTase activity and loss of Glc-1-P UTase activity." evidence="5">
    <original>E</original>
    <variation>H</variation>
    <variation>S</variation>
    <variation>T</variation>
    <location>
        <position position="146"/>
    </location>
</feature>
<feature type="mutagenesis site" description="Strong decrease in GalN-1-P AcTase activity and almost loss of GlcN-1-P AcTase activity." evidence="3">
    <original>H</original>
    <variation>A</variation>
    <location>
        <position position="308"/>
    </location>
</feature>
<feature type="mutagenesis site" description="Strong decrease in GalN-1-P AcTase activity and increase in GlcN-1-P AcTase activity." evidence="3">
    <original>Y</original>
    <variation>A</variation>
    <location>
        <position position="311"/>
    </location>
</feature>
<feature type="mutagenesis site" description="Strong decrease in GalN-1-P AcTase activity and decrease in GlcN-1-P AcTase activity." evidence="3">
    <original>N</original>
    <variation>A</variation>
    <location>
        <position position="331"/>
    </location>
</feature>
<feature type="mutagenesis site" description="Slight decrease in GalN-1-P AcTase activity and increase in GlcN-1-P AcTase activity." evidence="3">
    <original>K</original>
    <variation>A</variation>
    <location>
        <position position="337"/>
    </location>
</feature>
<feature type="mutagenesis site" description="Decrease in GalN-1-P AcTase activity and increase in GlcN-1-P AcTase activity." evidence="3">
    <original>K</original>
    <variation>A</variation>
    <location>
        <position position="340"/>
    </location>
</feature>
<feature type="mutagenesis site" description="No change in GlcNAc-1-P UTase activity. Shows 38% less GalN-1-P AcTase activity than the wild-type, but increases GlcN-1-P AcTase activity 16.8 times. Significantly affects the thermostability of the entire protein." evidence="3">
    <location>
        <begin position="391"/>
        <end position="401"/>
    </location>
</feature>
<feature type="mutagenesis site" description="No change in GlcNAc-1-P UTase activity. Shows 20% less GalN-1-P AcTase activity than the wild-type, but increases GlcN-1-P AcTase activity 4.8 times. Does not affect thermostability." evidence="3">
    <location>
        <begin position="397"/>
        <end position="401"/>
    </location>
</feature>
<feature type="strand" evidence="18">
    <location>
        <begin position="2"/>
        <end position="6"/>
    </location>
</feature>
<feature type="helix" evidence="18">
    <location>
        <begin position="12"/>
        <end position="14"/>
    </location>
</feature>
<feature type="helix" evidence="18">
    <location>
        <begin position="17"/>
        <end position="19"/>
    </location>
</feature>
<feature type="helix" evidence="18">
    <location>
        <begin position="23"/>
        <end position="25"/>
    </location>
</feature>
<feature type="helix" evidence="18">
    <location>
        <begin position="33"/>
        <end position="43"/>
    </location>
</feature>
<feature type="strand" evidence="18">
    <location>
        <begin position="48"/>
        <end position="53"/>
    </location>
</feature>
<feature type="helix" evidence="18">
    <location>
        <begin position="55"/>
        <end position="57"/>
    </location>
</feature>
<feature type="helix" evidence="18">
    <location>
        <begin position="58"/>
        <end position="64"/>
    </location>
</feature>
<feature type="strand" evidence="18">
    <location>
        <begin position="69"/>
        <end position="72"/>
    </location>
</feature>
<feature type="strand" evidence="19">
    <location>
        <begin position="75"/>
        <end position="79"/>
    </location>
</feature>
<feature type="turn" evidence="18">
    <location>
        <begin position="81"/>
        <end position="83"/>
    </location>
</feature>
<feature type="helix" evidence="18">
    <location>
        <begin position="84"/>
        <end position="86"/>
    </location>
</feature>
<feature type="strand" evidence="18">
    <location>
        <begin position="90"/>
        <end position="97"/>
    </location>
</feature>
<feature type="strand" evidence="18">
    <location>
        <begin position="100"/>
        <end position="103"/>
    </location>
</feature>
<feature type="helix" evidence="18">
    <location>
        <begin position="106"/>
        <end position="111"/>
    </location>
</feature>
<feature type="strand" evidence="18">
    <location>
        <begin position="115"/>
        <end position="123"/>
    </location>
</feature>
<feature type="strand" evidence="18">
    <location>
        <begin position="128"/>
        <end position="130"/>
    </location>
</feature>
<feature type="strand" evidence="18">
    <location>
        <begin position="132"/>
        <end position="135"/>
    </location>
</feature>
<feature type="strand" evidence="18">
    <location>
        <begin position="139"/>
        <end position="145"/>
    </location>
</feature>
<feature type="strand" evidence="18">
    <location>
        <begin position="154"/>
        <end position="164"/>
    </location>
</feature>
<feature type="helix" evidence="18">
    <location>
        <begin position="166"/>
        <end position="173"/>
    </location>
</feature>
<feature type="strand" evidence="18">
    <location>
        <begin position="178"/>
        <end position="180"/>
    </location>
</feature>
<feature type="helix" evidence="18">
    <location>
        <begin position="184"/>
        <end position="194"/>
    </location>
</feature>
<feature type="strand" evidence="18">
    <location>
        <begin position="197"/>
        <end position="201"/>
    </location>
</feature>
<feature type="strand" evidence="18">
    <location>
        <begin position="206"/>
        <end position="208"/>
    </location>
</feature>
<feature type="helix" evidence="18">
    <location>
        <begin position="212"/>
        <end position="225"/>
    </location>
</feature>
<feature type="strand" evidence="18">
    <location>
        <begin position="233"/>
        <end position="235"/>
    </location>
</feature>
<feature type="strand" evidence="18">
    <location>
        <begin position="240"/>
        <end position="243"/>
    </location>
</feature>
<feature type="strand" evidence="18">
    <location>
        <begin position="245"/>
        <end position="247"/>
    </location>
</feature>
<feature type="strand" evidence="18">
    <location>
        <begin position="258"/>
        <end position="265"/>
    </location>
</feature>
<feature type="strand" evidence="18">
    <location>
        <begin position="281"/>
        <end position="283"/>
    </location>
</feature>
<feature type="strand" evidence="18">
    <location>
        <begin position="288"/>
        <end position="291"/>
    </location>
</feature>
<feature type="strand" evidence="18">
    <location>
        <begin position="294"/>
        <end position="300"/>
    </location>
</feature>
<feature type="strand" evidence="18">
    <location>
        <begin position="305"/>
        <end position="309"/>
    </location>
</feature>
<feature type="strand" evidence="18">
    <location>
        <begin position="311"/>
        <end position="314"/>
    </location>
</feature>
<feature type="strand" evidence="18">
    <location>
        <begin position="340"/>
        <end position="343"/>
    </location>
</feature>
<feature type="strand" evidence="18">
    <location>
        <begin position="346"/>
        <end position="349"/>
    </location>
</feature>